<reference key="1">
    <citation type="submission" date="2006-09" db="EMBL/GenBank/DDBJ databases">
        <authorList>
            <consortium name="NIH - Mammalian Gene Collection (MGC) project"/>
        </authorList>
    </citation>
    <scope>NUCLEOTIDE SEQUENCE [LARGE SCALE MRNA]</scope>
    <source>
        <strain>Hereford</strain>
        <tissue>Thalamus</tissue>
    </source>
</reference>
<feature type="chain" id="PRO_0000307196" description="DNA damage-inducible transcript 4 protein">
    <location>
        <begin position="1"/>
        <end position="229"/>
    </location>
</feature>
<feature type="region of interest" description="Disordered" evidence="3">
    <location>
        <begin position="1"/>
        <end position="66"/>
    </location>
</feature>
<feature type="compositionally biased region" description="Low complexity" evidence="3">
    <location>
        <begin position="9"/>
        <end position="18"/>
    </location>
</feature>
<feature type="modified residue" description="Phosphoserine" evidence="2">
    <location>
        <position position="16"/>
    </location>
</feature>
<feature type="modified residue" description="Phosphothreonine" evidence="2">
    <location>
        <position position="20"/>
    </location>
</feature>
<feature type="modified residue" description="Phosphothreonine" evidence="2">
    <location>
        <position position="22"/>
    </location>
</feature>
<sequence>MPSLWDRFSSSSSSSSLSRTPTPNQPPRSAWGSAAREEGLGRCGSLESSDCESLDSSNSGFGPEEDSAYLDGVSLPDFELLSDPEDEHLCASLMQLLQESLAQARLGSRRPARLLMPGQLVSQVGKELLRLAYSEPCGLRGALLDVCVEQGKSCHSVGQLALDPSLVPTFQLTLVLRLDSRLWPKIQGLFSSANSPFVPGFSQSLTLSTGFRVIKKKLYSSEQLLIEEC</sequence>
<comment type="function">
    <text evidence="1">Regulates cell growth, proliferation and survival via inhibition of the activity of the mammalian target of rapamycin complex 1 (mTORC1). Inhibition of mTORC1 is mediated by a pathway that involves DDIT4/REDD1, AKT1, the TSC1-TSC2 complex and the GTPase RHEB. Plays an important role in responses to cellular energy levels and cellular stress, including responses to hypoxia and DNA damage. Regulates p53/TP53-mediated apoptosis in response to DNA damage via its effect on mTORC1 activity. Its role in the response to hypoxia depends on the cell type; it mediates mTORC1 inhibition in fibroblasts and thymocytes, but not in hepatocytes. Inhibits neuronal differentiation and neurite outgrowth mediated by NGF via its effect on mTORC1 activity. Required for normal neuron migration during embryonic brain development. Plays a role in neuronal cell death. Required for mTORC1-mediated defense against viral protein synthesis and virus replication (By similarity).</text>
</comment>
<comment type="subunit">
    <text evidence="1">Monomer. Interacts with BTRC. Identified in a complex with CUL4A, DDB1 and BTRC. Interacts with TXNIP; this inhibits the proteasomal degradation of DDIT4 (By similarity).</text>
</comment>
<comment type="subcellular location">
    <subcellularLocation>
        <location evidence="1">Mitochondrion</location>
    </subcellularLocation>
    <subcellularLocation>
        <location evidence="1">Cytoplasm</location>
        <location evidence="1">Cytosol</location>
    </subcellularLocation>
</comment>
<comment type="PTM">
    <text evidence="1">Phosphorylated by GSK3B; this promotes proteasomal degradation.</text>
</comment>
<comment type="PTM">
    <text evidence="1">Polyubiquitinated by a DCX (DDB1-CUL4A-RBX1) E3 ubiquitin-protein ligase complex with BTRC as substrate-recognition component, leading to its proteasomal degradation.</text>
</comment>
<comment type="similarity">
    <text evidence="4">Belongs to the DDIT4 family.</text>
</comment>
<dbReference type="EMBL" id="BC123397">
    <property type="protein sequence ID" value="AAI23398.1"/>
    <property type="molecule type" value="mRNA"/>
</dbReference>
<dbReference type="RefSeq" id="NP_001069390.1">
    <property type="nucleotide sequence ID" value="NM_001075922.1"/>
</dbReference>
<dbReference type="SMR" id="Q08E62"/>
<dbReference type="FunCoup" id="Q08E62">
    <property type="interactions" value="195"/>
</dbReference>
<dbReference type="STRING" id="9913.ENSBTAP00000000187"/>
<dbReference type="PaxDb" id="9913-ENSBTAP00000000187"/>
<dbReference type="Ensembl" id="ENSBTAT00000000187.6">
    <property type="protein sequence ID" value="ENSBTAP00000000187.5"/>
    <property type="gene ID" value="ENSBTAG00000000163.6"/>
</dbReference>
<dbReference type="GeneID" id="529235"/>
<dbReference type="KEGG" id="bta:529235"/>
<dbReference type="CTD" id="54541"/>
<dbReference type="VEuPathDB" id="HostDB:ENSBTAG00000000163"/>
<dbReference type="VGNC" id="VGNC:27948">
    <property type="gene designation" value="DDIT4"/>
</dbReference>
<dbReference type="eggNOG" id="ENOG502RB72">
    <property type="taxonomic scope" value="Eukaryota"/>
</dbReference>
<dbReference type="GeneTree" id="ENSGT00530000063652"/>
<dbReference type="HOGENOM" id="CLU_086145_1_0_1"/>
<dbReference type="InParanoid" id="Q08E62"/>
<dbReference type="OMA" id="MPGLWER"/>
<dbReference type="OrthoDB" id="10018535at2759"/>
<dbReference type="TreeFam" id="TF105007"/>
<dbReference type="Reactome" id="R-BTA-5628897">
    <property type="pathway name" value="TP53 Regulates Metabolic Genes"/>
</dbReference>
<dbReference type="Proteomes" id="UP000009136">
    <property type="component" value="Chromosome 28"/>
</dbReference>
<dbReference type="Bgee" id="ENSBTAG00000000163">
    <property type="expression patterns" value="Expressed in urethra and 104 other cell types or tissues"/>
</dbReference>
<dbReference type="GO" id="GO:0005737">
    <property type="term" value="C:cytoplasm"/>
    <property type="evidence" value="ECO:0000250"/>
    <property type="project" value="UniProtKB"/>
</dbReference>
<dbReference type="GO" id="GO:0005829">
    <property type="term" value="C:cytosol"/>
    <property type="evidence" value="ECO:0007669"/>
    <property type="project" value="UniProtKB-SubCell"/>
</dbReference>
<dbReference type="GO" id="GO:0005739">
    <property type="term" value="C:mitochondrion"/>
    <property type="evidence" value="ECO:0007669"/>
    <property type="project" value="UniProtKB-SubCell"/>
</dbReference>
<dbReference type="GO" id="GO:0071889">
    <property type="term" value="F:14-3-3 protein binding"/>
    <property type="evidence" value="ECO:0000318"/>
    <property type="project" value="GO_Central"/>
</dbReference>
<dbReference type="GO" id="GO:0006915">
    <property type="term" value="P:apoptotic process"/>
    <property type="evidence" value="ECO:0000318"/>
    <property type="project" value="GO_Central"/>
</dbReference>
<dbReference type="GO" id="GO:0007420">
    <property type="term" value="P:brain development"/>
    <property type="evidence" value="ECO:0000250"/>
    <property type="project" value="UniProtKB"/>
</dbReference>
<dbReference type="GO" id="GO:0071549">
    <property type="term" value="P:cellular response to dexamethasone stimulus"/>
    <property type="evidence" value="ECO:0007669"/>
    <property type="project" value="Ensembl"/>
</dbReference>
<dbReference type="GO" id="GO:0051607">
    <property type="term" value="P:defense response to virus"/>
    <property type="evidence" value="ECO:0007669"/>
    <property type="project" value="UniProtKB-KW"/>
</dbReference>
<dbReference type="GO" id="GO:0035556">
    <property type="term" value="P:intracellular signal transduction"/>
    <property type="evidence" value="ECO:0000250"/>
    <property type="project" value="UniProtKB"/>
</dbReference>
<dbReference type="GO" id="GO:0042771">
    <property type="term" value="P:intrinsic apoptotic signaling pathway in response to DNA damage by p53 class mediator"/>
    <property type="evidence" value="ECO:0000250"/>
    <property type="project" value="UniProtKB"/>
</dbReference>
<dbReference type="GO" id="GO:0045820">
    <property type="term" value="P:negative regulation of glycolytic process"/>
    <property type="evidence" value="ECO:0007669"/>
    <property type="project" value="Ensembl"/>
</dbReference>
<dbReference type="GO" id="GO:0032007">
    <property type="term" value="P:negative regulation of TOR signaling"/>
    <property type="evidence" value="ECO:0000250"/>
    <property type="project" value="UniProtKB"/>
</dbReference>
<dbReference type="GO" id="GO:0030182">
    <property type="term" value="P:neuron differentiation"/>
    <property type="evidence" value="ECO:0000250"/>
    <property type="project" value="UniProtKB"/>
</dbReference>
<dbReference type="GO" id="GO:0001764">
    <property type="term" value="P:neuron migration"/>
    <property type="evidence" value="ECO:0000250"/>
    <property type="project" value="UniProtKB"/>
</dbReference>
<dbReference type="GO" id="GO:0048011">
    <property type="term" value="P:neurotrophin TRK receptor signaling pathway"/>
    <property type="evidence" value="ECO:0000250"/>
    <property type="project" value="UniProtKB"/>
</dbReference>
<dbReference type="GO" id="GO:0032984">
    <property type="term" value="P:protein-containing complex disassembly"/>
    <property type="evidence" value="ECO:0007669"/>
    <property type="project" value="Ensembl"/>
</dbReference>
<dbReference type="GO" id="GO:0072593">
    <property type="term" value="P:reactive oxygen species metabolic process"/>
    <property type="evidence" value="ECO:0007669"/>
    <property type="project" value="Ensembl"/>
</dbReference>
<dbReference type="GO" id="GO:0001666">
    <property type="term" value="P:response to hypoxia"/>
    <property type="evidence" value="ECO:0000250"/>
    <property type="project" value="UniProtKB"/>
</dbReference>
<dbReference type="FunFam" id="3.90.470.40:FF:000001">
    <property type="entry name" value="DNA damage-inducible transcript 4 protein"/>
    <property type="match status" value="1"/>
</dbReference>
<dbReference type="Gene3D" id="3.90.470.40">
    <property type="entry name" value="RTP801-like"/>
    <property type="match status" value="1"/>
</dbReference>
<dbReference type="InterPro" id="IPR012918">
    <property type="entry name" value="RTP801-like"/>
</dbReference>
<dbReference type="InterPro" id="IPR038281">
    <property type="entry name" value="RTP801-like_C_sf"/>
</dbReference>
<dbReference type="PANTHER" id="PTHR12478:SF7">
    <property type="entry name" value="DNA DAMAGE-INDUCIBLE TRANSCRIPT 4 PROTEIN"/>
    <property type="match status" value="1"/>
</dbReference>
<dbReference type="PANTHER" id="PTHR12478">
    <property type="entry name" value="DNA-DAMAGE-INDUCIBLE TRANSCRIPT 4 PROTEIN DDIT4"/>
    <property type="match status" value="1"/>
</dbReference>
<dbReference type="Pfam" id="PF07809">
    <property type="entry name" value="RTP801_C"/>
    <property type="match status" value="1"/>
</dbReference>
<protein>
    <recommendedName>
        <fullName>DNA damage-inducible transcript 4 protein</fullName>
    </recommendedName>
</protein>
<gene>
    <name type="primary">DDIT4</name>
</gene>
<name>DDIT4_BOVIN</name>
<evidence type="ECO:0000250" key="1"/>
<evidence type="ECO:0000250" key="2">
    <source>
        <dbReference type="UniProtKB" id="Q9NX09"/>
    </source>
</evidence>
<evidence type="ECO:0000256" key="3">
    <source>
        <dbReference type="SAM" id="MobiDB-lite"/>
    </source>
</evidence>
<evidence type="ECO:0000305" key="4"/>
<accession>Q08E62</accession>
<keyword id="KW-0051">Antiviral defense</keyword>
<keyword id="KW-0053">Apoptosis</keyword>
<keyword id="KW-0963">Cytoplasm</keyword>
<keyword id="KW-0496">Mitochondrion</keyword>
<keyword id="KW-0597">Phosphoprotein</keyword>
<keyword id="KW-1185">Reference proteome</keyword>
<keyword id="KW-0832">Ubl conjugation</keyword>
<proteinExistence type="evidence at transcript level"/>
<organism>
    <name type="scientific">Bos taurus</name>
    <name type="common">Bovine</name>
    <dbReference type="NCBI Taxonomy" id="9913"/>
    <lineage>
        <taxon>Eukaryota</taxon>
        <taxon>Metazoa</taxon>
        <taxon>Chordata</taxon>
        <taxon>Craniata</taxon>
        <taxon>Vertebrata</taxon>
        <taxon>Euteleostomi</taxon>
        <taxon>Mammalia</taxon>
        <taxon>Eutheria</taxon>
        <taxon>Laurasiatheria</taxon>
        <taxon>Artiodactyla</taxon>
        <taxon>Ruminantia</taxon>
        <taxon>Pecora</taxon>
        <taxon>Bovidae</taxon>
        <taxon>Bovinae</taxon>
        <taxon>Bos</taxon>
    </lineage>
</organism>